<organism>
    <name type="scientific">Photobacterium profundum (strain SS9)</name>
    <dbReference type="NCBI Taxonomy" id="298386"/>
    <lineage>
        <taxon>Bacteria</taxon>
        <taxon>Pseudomonadati</taxon>
        <taxon>Pseudomonadota</taxon>
        <taxon>Gammaproteobacteria</taxon>
        <taxon>Vibrionales</taxon>
        <taxon>Vibrionaceae</taxon>
        <taxon>Photobacterium</taxon>
    </lineage>
</organism>
<feature type="chain" id="PRO_0000329757" description="Polyribonucleotide nucleotidyltransferase">
    <location>
        <begin position="1"/>
        <end position="707"/>
    </location>
</feature>
<feature type="domain" description="KH" evidence="1">
    <location>
        <begin position="552"/>
        <end position="611"/>
    </location>
</feature>
<feature type="domain" description="S1 motif" evidence="1">
    <location>
        <begin position="621"/>
        <end position="689"/>
    </location>
</feature>
<feature type="binding site" evidence="1">
    <location>
        <position position="485"/>
    </location>
    <ligand>
        <name>Mg(2+)</name>
        <dbReference type="ChEBI" id="CHEBI:18420"/>
    </ligand>
</feature>
<feature type="binding site" evidence="1">
    <location>
        <position position="491"/>
    </location>
    <ligand>
        <name>Mg(2+)</name>
        <dbReference type="ChEBI" id="CHEBI:18420"/>
    </ligand>
</feature>
<evidence type="ECO:0000255" key="1">
    <source>
        <dbReference type="HAMAP-Rule" id="MF_01595"/>
    </source>
</evidence>
<proteinExistence type="inferred from homology"/>
<accession>Q6LUI8</accession>
<keyword id="KW-0963">Cytoplasm</keyword>
<keyword id="KW-0460">Magnesium</keyword>
<keyword id="KW-0479">Metal-binding</keyword>
<keyword id="KW-0548">Nucleotidyltransferase</keyword>
<keyword id="KW-1185">Reference proteome</keyword>
<keyword id="KW-0694">RNA-binding</keyword>
<keyword id="KW-0808">Transferase</keyword>
<comment type="function">
    <text evidence="1">Involved in mRNA degradation. Catalyzes the phosphorolysis of single-stranded polyribonucleotides processively in the 3'- to 5'-direction.</text>
</comment>
<comment type="catalytic activity">
    <reaction evidence="1">
        <text>RNA(n+1) + phosphate = RNA(n) + a ribonucleoside 5'-diphosphate</text>
        <dbReference type="Rhea" id="RHEA:22096"/>
        <dbReference type="Rhea" id="RHEA-COMP:14527"/>
        <dbReference type="Rhea" id="RHEA-COMP:17342"/>
        <dbReference type="ChEBI" id="CHEBI:43474"/>
        <dbReference type="ChEBI" id="CHEBI:57930"/>
        <dbReference type="ChEBI" id="CHEBI:140395"/>
        <dbReference type="EC" id="2.7.7.8"/>
    </reaction>
</comment>
<comment type="cofactor">
    <cofactor evidence="1">
        <name>Mg(2+)</name>
        <dbReference type="ChEBI" id="CHEBI:18420"/>
    </cofactor>
</comment>
<comment type="subunit">
    <text evidence="1">Component of the RNA degradosome, which is a multiprotein complex involved in RNA processing and mRNA degradation.</text>
</comment>
<comment type="subcellular location">
    <subcellularLocation>
        <location evidence="1">Cytoplasm</location>
    </subcellularLocation>
</comment>
<comment type="similarity">
    <text evidence="1">Belongs to the polyribonucleotide nucleotidyltransferase family.</text>
</comment>
<name>PNP_PHOPR</name>
<dbReference type="EC" id="2.7.7.8" evidence="1"/>
<dbReference type="EMBL" id="CR378664">
    <property type="protein sequence ID" value="CAG19037.1"/>
    <property type="molecule type" value="Genomic_DNA"/>
</dbReference>
<dbReference type="RefSeq" id="WP_011217386.1">
    <property type="nucleotide sequence ID" value="NC_006370.1"/>
</dbReference>
<dbReference type="SMR" id="Q6LUI8"/>
<dbReference type="STRING" id="298386.PBPRA0616"/>
<dbReference type="KEGG" id="ppr:PBPRA0616"/>
<dbReference type="eggNOG" id="COG1185">
    <property type="taxonomic scope" value="Bacteria"/>
</dbReference>
<dbReference type="HOGENOM" id="CLU_004217_2_2_6"/>
<dbReference type="Proteomes" id="UP000000593">
    <property type="component" value="Chromosome 1"/>
</dbReference>
<dbReference type="GO" id="GO:0005829">
    <property type="term" value="C:cytosol"/>
    <property type="evidence" value="ECO:0007669"/>
    <property type="project" value="TreeGrafter"/>
</dbReference>
<dbReference type="GO" id="GO:0000175">
    <property type="term" value="F:3'-5'-RNA exonuclease activity"/>
    <property type="evidence" value="ECO:0007669"/>
    <property type="project" value="TreeGrafter"/>
</dbReference>
<dbReference type="GO" id="GO:0000287">
    <property type="term" value="F:magnesium ion binding"/>
    <property type="evidence" value="ECO:0007669"/>
    <property type="project" value="UniProtKB-UniRule"/>
</dbReference>
<dbReference type="GO" id="GO:0004654">
    <property type="term" value="F:polyribonucleotide nucleotidyltransferase activity"/>
    <property type="evidence" value="ECO:0007669"/>
    <property type="project" value="UniProtKB-UniRule"/>
</dbReference>
<dbReference type="GO" id="GO:0003723">
    <property type="term" value="F:RNA binding"/>
    <property type="evidence" value="ECO:0007669"/>
    <property type="project" value="UniProtKB-UniRule"/>
</dbReference>
<dbReference type="GO" id="GO:0006402">
    <property type="term" value="P:mRNA catabolic process"/>
    <property type="evidence" value="ECO:0007669"/>
    <property type="project" value="UniProtKB-UniRule"/>
</dbReference>
<dbReference type="GO" id="GO:0006396">
    <property type="term" value="P:RNA processing"/>
    <property type="evidence" value="ECO:0007669"/>
    <property type="project" value="InterPro"/>
</dbReference>
<dbReference type="CDD" id="cd02393">
    <property type="entry name" value="KH-I_PNPase"/>
    <property type="match status" value="1"/>
</dbReference>
<dbReference type="CDD" id="cd11363">
    <property type="entry name" value="RNase_PH_PNPase_1"/>
    <property type="match status" value="1"/>
</dbReference>
<dbReference type="CDD" id="cd11364">
    <property type="entry name" value="RNase_PH_PNPase_2"/>
    <property type="match status" value="1"/>
</dbReference>
<dbReference type="CDD" id="cd04472">
    <property type="entry name" value="S1_PNPase"/>
    <property type="match status" value="1"/>
</dbReference>
<dbReference type="FunFam" id="2.40.50.140:FF:000023">
    <property type="entry name" value="Polyribonucleotide nucleotidyltransferase"/>
    <property type="match status" value="1"/>
</dbReference>
<dbReference type="FunFam" id="3.30.1370.10:FF:000001">
    <property type="entry name" value="Polyribonucleotide nucleotidyltransferase"/>
    <property type="match status" value="1"/>
</dbReference>
<dbReference type="FunFam" id="3.30.230.70:FF:000001">
    <property type="entry name" value="Polyribonucleotide nucleotidyltransferase"/>
    <property type="match status" value="1"/>
</dbReference>
<dbReference type="FunFam" id="3.30.230.70:FF:000002">
    <property type="entry name" value="Polyribonucleotide nucleotidyltransferase"/>
    <property type="match status" value="1"/>
</dbReference>
<dbReference type="Gene3D" id="3.30.230.70">
    <property type="entry name" value="GHMP Kinase, N-terminal domain"/>
    <property type="match status" value="2"/>
</dbReference>
<dbReference type="Gene3D" id="3.30.1370.10">
    <property type="entry name" value="K Homology domain, type 1"/>
    <property type="match status" value="1"/>
</dbReference>
<dbReference type="Gene3D" id="2.40.50.140">
    <property type="entry name" value="Nucleic acid-binding proteins"/>
    <property type="match status" value="1"/>
</dbReference>
<dbReference type="HAMAP" id="MF_01595">
    <property type="entry name" value="PNPase"/>
    <property type="match status" value="1"/>
</dbReference>
<dbReference type="InterPro" id="IPR001247">
    <property type="entry name" value="ExoRNase_PH_dom1"/>
</dbReference>
<dbReference type="InterPro" id="IPR015847">
    <property type="entry name" value="ExoRNase_PH_dom2"/>
</dbReference>
<dbReference type="InterPro" id="IPR036345">
    <property type="entry name" value="ExoRNase_PH_dom2_sf"/>
</dbReference>
<dbReference type="InterPro" id="IPR004087">
    <property type="entry name" value="KH_dom"/>
</dbReference>
<dbReference type="InterPro" id="IPR004088">
    <property type="entry name" value="KH_dom_type_1"/>
</dbReference>
<dbReference type="InterPro" id="IPR036612">
    <property type="entry name" value="KH_dom_type_1_sf"/>
</dbReference>
<dbReference type="InterPro" id="IPR012340">
    <property type="entry name" value="NA-bd_OB-fold"/>
</dbReference>
<dbReference type="InterPro" id="IPR012162">
    <property type="entry name" value="PNPase"/>
</dbReference>
<dbReference type="InterPro" id="IPR027408">
    <property type="entry name" value="PNPase/RNase_PH_dom_sf"/>
</dbReference>
<dbReference type="InterPro" id="IPR015848">
    <property type="entry name" value="PNPase_PH_RNA-bd_bac/org-type"/>
</dbReference>
<dbReference type="InterPro" id="IPR036456">
    <property type="entry name" value="PNPase_PH_RNA-bd_sf"/>
</dbReference>
<dbReference type="InterPro" id="IPR020568">
    <property type="entry name" value="Ribosomal_Su5_D2-typ_SF"/>
</dbReference>
<dbReference type="InterPro" id="IPR003029">
    <property type="entry name" value="S1_domain"/>
</dbReference>
<dbReference type="NCBIfam" id="TIGR03591">
    <property type="entry name" value="polynuc_phos"/>
    <property type="match status" value="1"/>
</dbReference>
<dbReference type="NCBIfam" id="NF008805">
    <property type="entry name" value="PRK11824.1"/>
    <property type="match status" value="1"/>
</dbReference>
<dbReference type="PANTHER" id="PTHR11252">
    <property type="entry name" value="POLYRIBONUCLEOTIDE NUCLEOTIDYLTRANSFERASE"/>
    <property type="match status" value="1"/>
</dbReference>
<dbReference type="PANTHER" id="PTHR11252:SF0">
    <property type="entry name" value="POLYRIBONUCLEOTIDE NUCLEOTIDYLTRANSFERASE 1, MITOCHONDRIAL"/>
    <property type="match status" value="1"/>
</dbReference>
<dbReference type="Pfam" id="PF00013">
    <property type="entry name" value="KH_1"/>
    <property type="match status" value="1"/>
</dbReference>
<dbReference type="Pfam" id="PF03726">
    <property type="entry name" value="PNPase"/>
    <property type="match status" value="1"/>
</dbReference>
<dbReference type="Pfam" id="PF01138">
    <property type="entry name" value="RNase_PH"/>
    <property type="match status" value="2"/>
</dbReference>
<dbReference type="Pfam" id="PF03725">
    <property type="entry name" value="RNase_PH_C"/>
    <property type="match status" value="2"/>
</dbReference>
<dbReference type="Pfam" id="PF00575">
    <property type="entry name" value="S1"/>
    <property type="match status" value="1"/>
</dbReference>
<dbReference type="PIRSF" id="PIRSF005499">
    <property type="entry name" value="PNPase"/>
    <property type="match status" value="1"/>
</dbReference>
<dbReference type="SMART" id="SM00322">
    <property type="entry name" value="KH"/>
    <property type="match status" value="1"/>
</dbReference>
<dbReference type="SMART" id="SM00316">
    <property type="entry name" value="S1"/>
    <property type="match status" value="1"/>
</dbReference>
<dbReference type="SUPFAM" id="SSF54791">
    <property type="entry name" value="Eukaryotic type KH-domain (KH-domain type I)"/>
    <property type="match status" value="1"/>
</dbReference>
<dbReference type="SUPFAM" id="SSF50249">
    <property type="entry name" value="Nucleic acid-binding proteins"/>
    <property type="match status" value="1"/>
</dbReference>
<dbReference type="SUPFAM" id="SSF46915">
    <property type="entry name" value="Polynucleotide phosphorylase/guanosine pentaphosphate synthase (PNPase/GPSI), domain 3"/>
    <property type="match status" value="1"/>
</dbReference>
<dbReference type="SUPFAM" id="SSF55666">
    <property type="entry name" value="Ribonuclease PH domain 2-like"/>
    <property type="match status" value="2"/>
</dbReference>
<dbReference type="SUPFAM" id="SSF54211">
    <property type="entry name" value="Ribosomal protein S5 domain 2-like"/>
    <property type="match status" value="2"/>
</dbReference>
<dbReference type="PROSITE" id="PS50084">
    <property type="entry name" value="KH_TYPE_1"/>
    <property type="match status" value="1"/>
</dbReference>
<dbReference type="PROSITE" id="PS50126">
    <property type="entry name" value="S1"/>
    <property type="match status" value="1"/>
</dbReference>
<gene>
    <name evidence="1" type="primary">pnp</name>
    <name type="ordered locus">PBPRA0616</name>
</gene>
<sequence length="707" mass="76579">MNPIVKTFQYGNHTVTLETGVMARQATAAVMASMDDTSVFVSVVGKKAAVEGQDFFPLTVNYQERTYAAGKIPGGFFKREGRPSEGETLTARLIDRPIRPLFPSAFKNEVQVIATVVSVNPEVNPDMITMIATSAALAISGLPFNGPIGAARVGFINDQFVLNPSNTELEESRLDLVVSGTKDAVLMVESEADRLSEETMLQAVVYGHDQQQVVINAINEFAAEVATPAWDWTAPVVNAELKARVADKAATRLSDAYQITEKMARYDEVGSIKNDVVASLLAEDETLDERELRGMLSSLEKHVVRGRIIAGHPRIDGREKDMVRALDVRTGVLPRTHGSSLFTRGETQALVTATLGTQRDAQIIDSIMGEKKDHFLLHYNFPPYCVGETGFVGSPKRREIGHGKLAKRGIAAVMPSVEEFPYTVRVVSEITESNGSSSMASVCGTSLALMDAGVPIKASVAGIAMGLVKEGDDFVVLSDILGDEDHLGDMDFKVAGTDDGITALQMDIKIEGITKEIMQIALNQAKGARKHILSVMDDAIGTHRDDISQFAPRIHTMKINSDKIKDVIGKGGAVIRALTEETGTTIEIEDDGTIKIAATEGAAAKEAIRRIEEITADVEVGRIYTGKVMRIVDFGAFVSVIGAKEGLVHISQIAQERVEKVSDHLQMGQEVQVKVLEIDRQGRIRLSMKEAVADQNPATVQDEQPQG</sequence>
<protein>
    <recommendedName>
        <fullName evidence="1">Polyribonucleotide nucleotidyltransferase</fullName>
        <ecNumber evidence="1">2.7.7.8</ecNumber>
    </recommendedName>
    <alternativeName>
        <fullName evidence="1">Polynucleotide phosphorylase</fullName>
        <shortName evidence="1">PNPase</shortName>
    </alternativeName>
</protein>
<reference key="1">
    <citation type="journal article" date="2005" name="Science">
        <title>Life at depth: Photobacterium profundum genome sequence and expression analysis.</title>
        <authorList>
            <person name="Vezzi A."/>
            <person name="Campanaro S."/>
            <person name="D'Angelo M."/>
            <person name="Simonato F."/>
            <person name="Vitulo N."/>
            <person name="Lauro F.M."/>
            <person name="Cestaro A."/>
            <person name="Malacrida G."/>
            <person name="Simionati B."/>
            <person name="Cannata N."/>
            <person name="Romualdi C."/>
            <person name="Bartlett D.H."/>
            <person name="Valle G."/>
        </authorList>
    </citation>
    <scope>NUCLEOTIDE SEQUENCE [LARGE SCALE GENOMIC DNA]</scope>
    <source>
        <strain>ATCC BAA-1253 / SS9</strain>
    </source>
</reference>